<comment type="function">
    <text evidence="1">ATP-dependent carboxylate-amine ligase which exhibits weak glutamate--cysteine ligase activity.</text>
</comment>
<comment type="catalytic activity">
    <reaction evidence="1">
        <text>L-cysteine + L-glutamate + ATP = gamma-L-glutamyl-L-cysteine + ADP + phosphate + H(+)</text>
        <dbReference type="Rhea" id="RHEA:13285"/>
        <dbReference type="ChEBI" id="CHEBI:15378"/>
        <dbReference type="ChEBI" id="CHEBI:29985"/>
        <dbReference type="ChEBI" id="CHEBI:30616"/>
        <dbReference type="ChEBI" id="CHEBI:35235"/>
        <dbReference type="ChEBI" id="CHEBI:43474"/>
        <dbReference type="ChEBI" id="CHEBI:58173"/>
        <dbReference type="ChEBI" id="CHEBI:456216"/>
        <dbReference type="EC" id="6.3.2.2"/>
    </reaction>
</comment>
<comment type="similarity">
    <text evidence="1">Belongs to the glutamate--cysteine ligase type 2 family. YbdK subfamily.</text>
</comment>
<feature type="chain" id="PRO_1000189573" description="Putative glutamate--cysteine ligase 2">
    <location>
        <begin position="1"/>
        <end position="371"/>
    </location>
</feature>
<protein>
    <recommendedName>
        <fullName evidence="1">Putative glutamate--cysteine ligase 2</fullName>
        <ecNumber evidence="1">6.3.2.2</ecNumber>
    </recommendedName>
    <alternativeName>
        <fullName evidence="1">Gamma-glutamylcysteine synthetase 2</fullName>
        <shortName evidence="1">GCS 2</shortName>
        <shortName evidence="1">Gamma-GCS 2</shortName>
    </alternativeName>
</protein>
<proteinExistence type="inferred from homology"/>
<dbReference type="EC" id="6.3.2.2" evidence="1"/>
<dbReference type="EMBL" id="CU633749">
    <property type="protein sequence ID" value="CAQ71002.1"/>
    <property type="molecule type" value="Genomic_DNA"/>
</dbReference>
<dbReference type="RefSeq" id="WP_012354268.1">
    <property type="nucleotide sequence ID" value="NC_010528.1"/>
</dbReference>
<dbReference type="SMR" id="B3R7K5"/>
<dbReference type="GeneID" id="29762536"/>
<dbReference type="KEGG" id="cti:RALTA_A3082"/>
<dbReference type="eggNOG" id="COG2170">
    <property type="taxonomic scope" value="Bacteria"/>
</dbReference>
<dbReference type="HOGENOM" id="CLU_044848_1_1_4"/>
<dbReference type="BioCyc" id="CTAI977880:RALTA_RS15070-MONOMER"/>
<dbReference type="Proteomes" id="UP000001692">
    <property type="component" value="Chromosome 1"/>
</dbReference>
<dbReference type="GO" id="GO:0005524">
    <property type="term" value="F:ATP binding"/>
    <property type="evidence" value="ECO:0007669"/>
    <property type="project" value="UniProtKB-KW"/>
</dbReference>
<dbReference type="GO" id="GO:0004357">
    <property type="term" value="F:glutamate-cysteine ligase activity"/>
    <property type="evidence" value="ECO:0007669"/>
    <property type="project" value="UniProtKB-EC"/>
</dbReference>
<dbReference type="GO" id="GO:0042398">
    <property type="term" value="P:modified amino acid biosynthetic process"/>
    <property type="evidence" value="ECO:0007669"/>
    <property type="project" value="InterPro"/>
</dbReference>
<dbReference type="Gene3D" id="3.30.590.20">
    <property type="match status" value="1"/>
</dbReference>
<dbReference type="HAMAP" id="MF_01609">
    <property type="entry name" value="Glu_cys_ligase_2"/>
    <property type="match status" value="1"/>
</dbReference>
<dbReference type="InterPro" id="IPR050141">
    <property type="entry name" value="GCL_type2/YbdK_subfam"/>
</dbReference>
<dbReference type="InterPro" id="IPR006336">
    <property type="entry name" value="GCS2"/>
</dbReference>
<dbReference type="InterPro" id="IPR014746">
    <property type="entry name" value="Gln_synth/guanido_kin_cat_dom"/>
</dbReference>
<dbReference type="InterPro" id="IPR011793">
    <property type="entry name" value="YbdK"/>
</dbReference>
<dbReference type="NCBIfam" id="TIGR02050">
    <property type="entry name" value="gshA_cyan_rel"/>
    <property type="match status" value="1"/>
</dbReference>
<dbReference type="NCBIfam" id="NF010040">
    <property type="entry name" value="PRK13516.1"/>
    <property type="match status" value="1"/>
</dbReference>
<dbReference type="PANTHER" id="PTHR36510">
    <property type="entry name" value="GLUTAMATE--CYSTEINE LIGASE 2-RELATED"/>
    <property type="match status" value="1"/>
</dbReference>
<dbReference type="PANTHER" id="PTHR36510:SF1">
    <property type="entry name" value="GLUTAMATE--CYSTEINE LIGASE 2-RELATED"/>
    <property type="match status" value="1"/>
</dbReference>
<dbReference type="Pfam" id="PF04107">
    <property type="entry name" value="GCS2"/>
    <property type="match status" value="1"/>
</dbReference>
<dbReference type="SUPFAM" id="SSF55931">
    <property type="entry name" value="Glutamine synthetase/guanido kinase"/>
    <property type="match status" value="1"/>
</dbReference>
<keyword id="KW-0067">ATP-binding</keyword>
<keyword id="KW-0436">Ligase</keyword>
<keyword id="KW-0547">Nucleotide-binding</keyword>
<organism>
    <name type="scientific">Cupriavidus taiwanensis (strain DSM 17343 / BCRC 17206 / CCUG 44338 / CIP 107171 / LMG 19424 / R1)</name>
    <name type="common">Ralstonia taiwanensis (strain LMG 19424)</name>
    <dbReference type="NCBI Taxonomy" id="977880"/>
    <lineage>
        <taxon>Bacteria</taxon>
        <taxon>Pseudomonadati</taxon>
        <taxon>Pseudomonadota</taxon>
        <taxon>Betaproteobacteria</taxon>
        <taxon>Burkholderiales</taxon>
        <taxon>Burkholderiaceae</taxon>
        <taxon>Cupriavidus</taxon>
    </lineage>
</organism>
<gene>
    <name type="ordered locus">RALTA_A3082</name>
</gene>
<name>GCS2_CUPTR</name>
<sequence>MSLEPFKQSEALTFGVELELQLVNRHDYDLAPFAPDLLRALKGAEHAGDIKPEISPSMIEISTGICHSYQQALEELTVMRDLMVAASRSLNLGIAGGGTHPFQQWSDRTISDSPRYQYISELYGYLAKQFTVFGQHVHIGCPSADESLFLLHAIGRYVPHFVALAASSPYVQGVDTGFASARLNSVAAFPMSGRAPFLLTWDAFTAYFEKMRNTGVIESMKDFYWDIRPKPEFGTIEVRVMDTPLTVQRACDIAAYIQMLARYLLLSRPFMPQEDDYLVYTFNRFQACRFGLEGEYVHPNELTRMPIADHILSICDALVPHAEALGSLPALANIRALAERRDGDAHWLRQVDAEARSQRETVRKACDQWAA</sequence>
<reference key="1">
    <citation type="journal article" date="2008" name="Genome Res.">
        <title>Genome sequence of the beta-rhizobium Cupriavidus taiwanensis and comparative genomics of rhizobia.</title>
        <authorList>
            <person name="Amadou C."/>
            <person name="Pascal G."/>
            <person name="Mangenot S."/>
            <person name="Glew M."/>
            <person name="Bontemps C."/>
            <person name="Capela D."/>
            <person name="Carrere S."/>
            <person name="Cruveiller S."/>
            <person name="Dossat C."/>
            <person name="Lajus A."/>
            <person name="Marchetti M."/>
            <person name="Poinsot V."/>
            <person name="Rouy Z."/>
            <person name="Servin B."/>
            <person name="Saad M."/>
            <person name="Schenowitz C."/>
            <person name="Barbe V."/>
            <person name="Batut J."/>
            <person name="Medigue C."/>
            <person name="Masson-Boivin C."/>
        </authorList>
    </citation>
    <scope>NUCLEOTIDE SEQUENCE [LARGE SCALE GENOMIC DNA]</scope>
    <source>
        <strain>DSM 17343 / BCRC 17206 / CCUG 44338 / CIP 107171 / LMG 19424 / R1</strain>
    </source>
</reference>
<evidence type="ECO:0000255" key="1">
    <source>
        <dbReference type="HAMAP-Rule" id="MF_01609"/>
    </source>
</evidence>
<accession>B3R7K5</accession>